<dbReference type="EC" id="2.3.1.-"/>
<dbReference type="EC" id="2.3.1.23" evidence="2"/>
<dbReference type="EC" id="2.3.1.n7" evidence="4"/>
<dbReference type="EC" id="2.3.1.n6" evidence="4"/>
<dbReference type="EMBL" id="AB305045">
    <property type="protein sequence ID" value="BAF93901.1"/>
    <property type="molecule type" value="mRNA"/>
</dbReference>
<dbReference type="EMBL" id="AB297382">
    <property type="protein sequence ID" value="BAG12121.1"/>
    <property type="molecule type" value="mRNA"/>
</dbReference>
<dbReference type="EMBL" id="AK033388">
    <property type="protein sequence ID" value="BAC28261.1"/>
    <property type="molecule type" value="mRNA"/>
</dbReference>
<dbReference type="EMBL" id="AK146984">
    <property type="protein sequence ID" value="BAE27587.1"/>
    <property type="molecule type" value="mRNA"/>
</dbReference>
<dbReference type="EMBL" id="AL645749">
    <property type="protein sequence ID" value="CAI24381.1"/>
    <property type="molecule type" value="Genomic_DNA"/>
</dbReference>
<dbReference type="EMBL" id="AL450321">
    <property type="protein sequence ID" value="CAI24381.1"/>
    <property type="status" value="JOINED"/>
    <property type="molecule type" value="Genomic_DNA"/>
</dbReference>
<dbReference type="EMBL" id="AL450321">
    <property type="protein sequence ID" value="CAI24665.1"/>
    <property type="molecule type" value="Genomic_DNA"/>
</dbReference>
<dbReference type="EMBL" id="AL645749">
    <property type="protein sequence ID" value="CAI24665.1"/>
    <property type="status" value="JOINED"/>
    <property type="molecule type" value="Genomic_DNA"/>
</dbReference>
<dbReference type="EMBL" id="CH466561">
    <property type="protein sequence ID" value="EDL32389.1"/>
    <property type="molecule type" value="Genomic_DNA"/>
</dbReference>
<dbReference type="EMBL" id="CH466561">
    <property type="protein sequence ID" value="EDL32390.1"/>
    <property type="molecule type" value="Genomic_DNA"/>
</dbReference>
<dbReference type="EMBL" id="BC023845">
    <property type="protein sequence ID" value="AAH23845.1"/>
    <property type="molecule type" value="mRNA"/>
</dbReference>
<dbReference type="EMBL" id="BC024653">
    <property type="protein sequence ID" value="AAH24653.1"/>
    <property type="molecule type" value="mRNA"/>
</dbReference>
<dbReference type="CCDS" id="CCDS26414.1"/>
<dbReference type="RefSeq" id="NP_705774.1">
    <property type="nucleotide sequence ID" value="NM_153546.5"/>
</dbReference>
<dbReference type="SMR" id="Q8BH98"/>
<dbReference type="BioGRID" id="229994">
    <property type="interactions" value="1"/>
</dbReference>
<dbReference type="FunCoup" id="Q8BH98">
    <property type="interactions" value="1191"/>
</dbReference>
<dbReference type="STRING" id="10090.ENSMUSP00000045441"/>
<dbReference type="ChEMBL" id="CHEMBL1255152"/>
<dbReference type="SwissLipids" id="SLP:000000288"/>
<dbReference type="iPTMnet" id="Q8BH98"/>
<dbReference type="PhosphoSitePlus" id="Q8BH98"/>
<dbReference type="PaxDb" id="10090-ENSMUSP00000045441"/>
<dbReference type="ProteomicsDB" id="293417"/>
<dbReference type="Antibodypedia" id="25215">
    <property type="antibodies" value="27 antibodies from 12 providers"/>
</dbReference>
<dbReference type="DNASU" id="218121"/>
<dbReference type="Ensembl" id="ENSMUST00000047311.16">
    <property type="protein sequence ID" value="ENSMUSP00000045441.9"/>
    <property type="gene ID" value="ENSMUSG00000038732.16"/>
</dbReference>
<dbReference type="GeneID" id="218121"/>
<dbReference type="KEGG" id="mmu:218121"/>
<dbReference type="UCSC" id="uc007pyt.1">
    <property type="organism name" value="mouse"/>
</dbReference>
<dbReference type="AGR" id="MGI:2387184"/>
<dbReference type="CTD" id="154141"/>
<dbReference type="MGI" id="MGI:2387184">
    <property type="gene designation" value="Mboat1"/>
</dbReference>
<dbReference type="VEuPathDB" id="HostDB:ENSMUSG00000038732"/>
<dbReference type="eggNOG" id="KOG2704">
    <property type="taxonomic scope" value="Eukaryota"/>
</dbReference>
<dbReference type="GeneTree" id="ENSGT01030000234564"/>
<dbReference type="HOGENOM" id="CLU_011340_3_0_1"/>
<dbReference type="InParanoid" id="Q8BH98"/>
<dbReference type="OMA" id="YVVMQAA"/>
<dbReference type="OrthoDB" id="286734at2759"/>
<dbReference type="PhylomeDB" id="Q8BH98"/>
<dbReference type="TreeFam" id="TF314906"/>
<dbReference type="Reactome" id="R-MMU-1482801">
    <property type="pathway name" value="Acyl chain remodelling of PS"/>
</dbReference>
<dbReference type="Reactome" id="R-MMU-1482839">
    <property type="pathway name" value="Acyl chain remodelling of PE"/>
</dbReference>
<dbReference type="UniPathway" id="UPA00085"/>
<dbReference type="BioGRID-ORCS" id="218121">
    <property type="hits" value="2 hits in 81 CRISPR screens"/>
</dbReference>
<dbReference type="ChiTaRS" id="Mboat1">
    <property type="organism name" value="mouse"/>
</dbReference>
<dbReference type="PRO" id="PR:Q8BH98"/>
<dbReference type="Proteomes" id="UP000000589">
    <property type="component" value="Chromosome 13"/>
</dbReference>
<dbReference type="RNAct" id="Q8BH98">
    <property type="molecule type" value="protein"/>
</dbReference>
<dbReference type="Bgee" id="ENSMUSG00000038732">
    <property type="expression patterns" value="Expressed in left colon and 173 other cell types or tissues"/>
</dbReference>
<dbReference type="GO" id="GO:0005789">
    <property type="term" value="C:endoplasmic reticulum membrane"/>
    <property type="evidence" value="ECO:0000314"/>
    <property type="project" value="UniProtKB"/>
</dbReference>
<dbReference type="GO" id="GO:0047184">
    <property type="term" value="F:1-acylglycerophosphocholine O-acyltransferase activity"/>
    <property type="evidence" value="ECO:0007669"/>
    <property type="project" value="UniProtKB-EC"/>
</dbReference>
<dbReference type="GO" id="GO:0106262">
    <property type="term" value="F:1-acylglycerophosphoethanolamine O-acyltransferase activity"/>
    <property type="evidence" value="ECO:0000314"/>
    <property type="project" value="UniProtKB"/>
</dbReference>
<dbReference type="GO" id="GO:0106263">
    <property type="term" value="F:1-acylglycerophosphoserine O-acyltransferase activity"/>
    <property type="evidence" value="ECO:0000250"/>
    <property type="project" value="UniProtKB"/>
</dbReference>
<dbReference type="GO" id="GO:0036152">
    <property type="term" value="P:phosphatidylethanolamine acyl-chain remodeling"/>
    <property type="evidence" value="ECO:0000315"/>
    <property type="project" value="UniProtKB"/>
</dbReference>
<dbReference type="GO" id="GO:0036150">
    <property type="term" value="P:phosphatidylserine acyl-chain remodeling"/>
    <property type="evidence" value="ECO:0000250"/>
    <property type="project" value="UniProtKB"/>
</dbReference>
<dbReference type="GO" id="GO:0008654">
    <property type="term" value="P:phospholipid biosynthetic process"/>
    <property type="evidence" value="ECO:0000315"/>
    <property type="project" value="UniProtKB"/>
</dbReference>
<dbReference type="GO" id="GO:0010975">
    <property type="term" value="P:regulation of neuron projection development"/>
    <property type="evidence" value="ECO:0000315"/>
    <property type="project" value="UniProtKB"/>
</dbReference>
<dbReference type="InterPro" id="IPR049941">
    <property type="entry name" value="LPLAT_7/PORCN-like"/>
</dbReference>
<dbReference type="InterPro" id="IPR004299">
    <property type="entry name" value="MBOAT_fam"/>
</dbReference>
<dbReference type="PANTHER" id="PTHR13906:SF6">
    <property type="entry name" value="LYSOPHOSPHOLIPID ACYLTRANSFERASE 1"/>
    <property type="match status" value="1"/>
</dbReference>
<dbReference type="PANTHER" id="PTHR13906">
    <property type="entry name" value="PORCUPINE"/>
    <property type="match status" value="1"/>
</dbReference>
<dbReference type="Pfam" id="PF03062">
    <property type="entry name" value="MBOAT"/>
    <property type="match status" value="1"/>
</dbReference>
<reference key="1">
    <citation type="journal article" date="2007" name="J. Biol. Chem.">
        <title>LPT1 encodes a membrane-bound O-acyltransferase involved in the acylation of lysophospholipids in the yeast Saccharomyces cerevisiae.</title>
        <authorList>
            <person name="Tamaki H."/>
            <person name="Shimada A."/>
            <person name="Itoh Y."/>
            <person name="Ohya M."/>
            <person name="Takase J."/>
            <person name="Miyashita M."/>
            <person name="Miyagawa H."/>
            <person name="Nozaki H."/>
            <person name="Nakayama R."/>
            <person name="Kumagai H."/>
        </authorList>
    </citation>
    <scope>NUCLEOTIDE SEQUENCE [MRNA]</scope>
</reference>
<reference key="2">
    <citation type="journal article" date="2008" name="Proc. Natl. Acad. Sci. U.S.A.">
        <title>Discovery of a lysophospholipid acyltransferase family essential for membrane asymmetry and diversity.</title>
        <authorList>
            <person name="Hishikawa D."/>
            <person name="Shindou H."/>
            <person name="Kobayashi S."/>
            <person name="Nakanishi H."/>
            <person name="Taguchi R."/>
            <person name="Shimizu T."/>
        </authorList>
    </citation>
    <scope>NUCLEOTIDE SEQUENCE [MRNA]</scope>
    <scope>FUNCTION</scope>
    <scope>BIOPHYSICOCHEMICAL PROPERTIES</scope>
    <scope>SUBCELLULAR LOCATION</scope>
    <scope>TISSUE SPECIFICITY</scope>
    <scope>CATALYTIC ACTIVITY</scope>
</reference>
<reference key="3">
    <citation type="journal article" date="2005" name="Science">
        <title>The transcriptional landscape of the mammalian genome.</title>
        <authorList>
            <person name="Carninci P."/>
            <person name="Kasukawa T."/>
            <person name="Katayama S."/>
            <person name="Gough J."/>
            <person name="Frith M.C."/>
            <person name="Maeda N."/>
            <person name="Oyama R."/>
            <person name="Ravasi T."/>
            <person name="Lenhard B."/>
            <person name="Wells C."/>
            <person name="Kodzius R."/>
            <person name="Shimokawa K."/>
            <person name="Bajic V.B."/>
            <person name="Brenner S.E."/>
            <person name="Batalov S."/>
            <person name="Forrest A.R."/>
            <person name="Zavolan M."/>
            <person name="Davis M.J."/>
            <person name="Wilming L.G."/>
            <person name="Aidinis V."/>
            <person name="Allen J.E."/>
            <person name="Ambesi-Impiombato A."/>
            <person name="Apweiler R."/>
            <person name="Aturaliya R.N."/>
            <person name="Bailey T.L."/>
            <person name="Bansal M."/>
            <person name="Baxter L."/>
            <person name="Beisel K.W."/>
            <person name="Bersano T."/>
            <person name="Bono H."/>
            <person name="Chalk A.M."/>
            <person name="Chiu K.P."/>
            <person name="Choudhary V."/>
            <person name="Christoffels A."/>
            <person name="Clutterbuck D.R."/>
            <person name="Crowe M.L."/>
            <person name="Dalla E."/>
            <person name="Dalrymple B.P."/>
            <person name="de Bono B."/>
            <person name="Della Gatta G."/>
            <person name="di Bernardo D."/>
            <person name="Down T."/>
            <person name="Engstrom P."/>
            <person name="Fagiolini M."/>
            <person name="Faulkner G."/>
            <person name="Fletcher C.F."/>
            <person name="Fukushima T."/>
            <person name="Furuno M."/>
            <person name="Futaki S."/>
            <person name="Gariboldi M."/>
            <person name="Georgii-Hemming P."/>
            <person name="Gingeras T.R."/>
            <person name="Gojobori T."/>
            <person name="Green R.E."/>
            <person name="Gustincich S."/>
            <person name="Harbers M."/>
            <person name="Hayashi Y."/>
            <person name="Hensch T.K."/>
            <person name="Hirokawa N."/>
            <person name="Hill D."/>
            <person name="Huminiecki L."/>
            <person name="Iacono M."/>
            <person name="Ikeo K."/>
            <person name="Iwama A."/>
            <person name="Ishikawa T."/>
            <person name="Jakt M."/>
            <person name="Kanapin A."/>
            <person name="Katoh M."/>
            <person name="Kawasawa Y."/>
            <person name="Kelso J."/>
            <person name="Kitamura H."/>
            <person name="Kitano H."/>
            <person name="Kollias G."/>
            <person name="Krishnan S.P."/>
            <person name="Kruger A."/>
            <person name="Kummerfeld S.K."/>
            <person name="Kurochkin I.V."/>
            <person name="Lareau L.F."/>
            <person name="Lazarevic D."/>
            <person name="Lipovich L."/>
            <person name="Liu J."/>
            <person name="Liuni S."/>
            <person name="McWilliam S."/>
            <person name="Madan Babu M."/>
            <person name="Madera M."/>
            <person name="Marchionni L."/>
            <person name="Matsuda H."/>
            <person name="Matsuzawa S."/>
            <person name="Miki H."/>
            <person name="Mignone F."/>
            <person name="Miyake S."/>
            <person name="Morris K."/>
            <person name="Mottagui-Tabar S."/>
            <person name="Mulder N."/>
            <person name="Nakano N."/>
            <person name="Nakauchi H."/>
            <person name="Ng P."/>
            <person name="Nilsson R."/>
            <person name="Nishiguchi S."/>
            <person name="Nishikawa S."/>
            <person name="Nori F."/>
            <person name="Ohara O."/>
            <person name="Okazaki Y."/>
            <person name="Orlando V."/>
            <person name="Pang K.C."/>
            <person name="Pavan W.J."/>
            <person name="Pavesi G."/>
            <person name="Pesole G."/>
            <person name="Petrovsky N."/>
            <person name="Piazza S."/>
            <person name="Reed J."/>
            <person name="Reid J.F."/>
            <person name="Ring B.Z."/>
            <person name="Ringwald M."/>
            <person name="Rost B."/>
            <person name="Ruan Y."/>
            <person name="Salzberg S.L."/>
            <person name="Sandelin A."/>
            <person name="Schneider C."/>
            <person name="Schoenbach C."/>
            <person name="Sekiguchi K."/>
            <person name="Semple C.A."/>
            <person name="Seno S."/>
            <person name="Sessa L."/>
            <person name="Sheng Y."/>
            <person name="Shibata Y."/>
            <person name="Shimada H."/>
            <person name="Shimada K."/>
            <person name="Silva D."/>
            <person name="Sinclair B."/>
            <person name="Sperling S."/>
            <person name="Stupka E."/>
            <person name="Sugiura K."/>
            <person name="Sultana R."/>
            <person name="Takenaka Y."/>
            <person name="Taki K."/>
            <person name="Tammoja K."/>
            <person name="Tan S.L."/>
            <person name="Tang S."/>
            <person name="Taylor M.S."/>
            <person name="Tegner J."/>
            <person name="Teichmann S.A."/>
            <person name="Ueda H.R."/>
            <person name="van Nimwegen E."/>
            <person name="Verardo R."/>
            <person name="Wei C.L."/>
            <person name="Yagi K."/>
            <person name="Yamanishi H."/>
            <person name="Zabarovsky E."/>
            <person name="Zhu S."/>
            <person name="Zimmer A."/>
            <person name="Hide W."/>
            <person name="Bult C."/>
            <person name="Grimmond S.M."/>
            <person name="Teasdale R.D."/>
            <person name="Liu E.T."/>
            <person name="Brusic V."/>
            <person name="Quackenbush J."/>
            <person name="Wahlestedt C."/>
            <person name="Mattick J.S."/>
            <person name="Hume D.A."/>
            <person name="Kai C."/>
            <person name="Sasaki D."/>
            <person name="Tomaru Y."/>
            <person name="Fukuda S."/>
            <person name="Kanamori-Katayama M."/>
            <person name="Suzuki M."/>
            <person name="Aoki J."/>
            <person name="Arakawa T."/>
            <person name="Iida J."/>
            <person name="Imamura K."/>
            <person name="Itoh M."/>
            <person name="Kato T."/>
            <person name="Kawaji H."/>
            <person name="Kawagashira N."/>
            <person name="Kawashima T."/>
            <person name="Kojima M."/>
            <person name="Kondo S."/>
            <person name="Konno H."/>
            <person name="Nakano K."/>
            <person name="Ninomiya N."/>
            <person name="Nishio T."/>
            <person name="Okada M."/>
            <person name="Plessy C."/>
            <person name="Shibata K."/>
            <person name="Shiraki T."/>
            <person name="Suzuki S."/>
            <person name="Tagami M."/>
            <person name="Waki K."/>
            <person name="Watahiki A."/>
            <person name="Okamura-Oho Y."/>
            <person name="Suzuki H."/>
            <person name="Kawai J."/>
            <person name="Hayashizaki Y."/>
        </authorList>
    </citation>
    <scope>NUCLEOTIDE SEQUENCE [LARGE SCALE MRNA]</scope>
    <source>
        <strain>C57BL/6J</strain>
        <tissue>Amnion</tissue>
        <tissue>Lung</tissue>
    </source>
</reference>
<reference key="4">
    <citation type="journal article" date="2009" name="PLoS Biol.">
        <title>Lineage-specific biology revealed by a finished genome assembly of the mouse.</title>
        <authorList>
            <person name="Church D.M."/>
            <person name="Goodstadt L."/>
            <person name="Hillier L.W."/>
            <person name="Zody M.C."/>
            <person name="Goldstein S."/>
            <person name="She X."/>
            <person name="Bult C.J."/>
            <person name="Agarwala R."/>
            <person name="Cherry J.L."/>
            <person name="DiCuccio M."/>
            <person name="Hlavina W."/>
            <person name="Kapustin Y."/>
            <person name="Meric P."/>
            <person name="Maglott D."/>
            <person name="Birtle Z."/>
            <person name="Marques A.C."/>
            <person name="Graves T."/>
            <person name="Zhou S."/>
            <person name="Teague B."/>
            <person name="Potamousis K."/>
            <person name="Churas C."/>
            <person name="Place M."/>
            <person name="Herschleb J."/>
            <person name="Runnheim R."/>
            <person name="Forrest D."/>
            <person name="Amos-Landgraf J."/>
            <person name="Schwartz D.C."/>
            <person name="Cheng Z."/>
            <person name="Lindblad-Toh K."/>
            <person name="Eichler E.E."/>
            <person name="Ponting C.P."/>
        </authorList>
    </citation>
    <scope>NUCLEOTIDE SEQUENCE [LARGE SCALE GENOMIC DNA]</scope>
    <source>
        <strain>C57BL/6J</strain>
    </source>
</reference>
<reference key="5">
    <citation type="submission" date="2005-09" db="EMBL/GenBank/DDBJ databases">
        <authorList>
            <person name="Mural R.J."/>
            <person name="Adams M.D."/>
            <person name="Myers E.W."/>
            <person name="Smith H.O."/>
            <person name="Venter J.C."/>
        </authorList>
    </citation>
    <scope>NUCLEOTIDE SEQUENCE [LARGE SCALE GENOMIC DNA]</scope>
</reference>
<reference key="6">
    <citation type="journal article" date="2004" name="Genome Res.">
        <title>The status, quality, and expansion of the NIH full-length cDNA project: the Mammalian Gene Collection (MGC).</title>
        <authorList>
            <consortium name="The MGC Project Team"/>
        </authorList>
    </citation>
    <scope>NUCLEOTIDE SEQUENCE [LARGE SCALE MRNA]</scope>
    <source>
        <strain>Czech II</strain>
        <strain>FVB/N</strain>
        <tissue>Mammary tumor</tissue>
    </source>
</reference>
<reference key="7">
    <citation type="journal article" date="2016" name="FASEB J.">
        <title>Lysophosphatidylethanolamine acyltransferase 1/membrane-bound O-acyltransferase 1 regulates morphology and function of P19C6 cell-derived neurons.</title>
        <authorList>
            <person name="Tabe S."/>
            <person name="Hikiji H."/>
            <person name="Ariyoshi W."/>
            <person name="Hashidate-Yoshida T."/>
            <person name="Shindou H."/>
            <person name="Okinaga T."/>
            <person name="Shimizu T."/>
            <person name="Tominaga K."/>
            <person name="Nishihara T."/>
        </authorList>
    </citation>
    <scope>FUNCTION</scope>
    <scope>CATALYTIC ACTIVITY</scope>
</reference>
<feature type="chain" id="PRO_0000273019" description="Membrane-bound glycerophospholipid O-acyltransferase 1">
    <location>
        <begin position="1"/>
        <end position="492"/>
    </location>
</feature>
<feature type="transmembrane region" description="Helical" evidence="3">
    <location>
        <begin position="33"/>
        <end position="53"/>
    </location>
</feature>
<feature type="transmembrane region" description="Helical" evidence="3">
    <location>
        <begin position="69"/>
        <end position="89"/>
    </location>
</feature>
<feature type="transmembrane region" description="Helical" evidence="3">
    <location>
        <begin position="125"/>
        <end position="145"/>
    </location>
</feature>
<feature type="transmembrane region" description="Helical" evidence="3">
    <location>
        <begin position="179"/>
        <end position="199"/>
    </location>
</feature>
<feature type="transmembrane region" description="Helical" evidence="3">
    <location>
        <begin position="237"/>
        <end position="257"/>
    </location>
</feature>
<feature type="transmembrane region" description="Helical" evidence="3">
    <location>
        <begin position="296"/>
        <end position="316"/>
    </location>
</feature>
<feature type="transmembrane region" description="Helical" evidence="3">
    <location>
        <begin position="370"/>
        <end position="390"/>
    </location>
</feature>
<feature type="transmembrane region" description="Helical" evidence="3">
    <location>
        <begin position="423"/>
        <end position="443"/>
    </location>
</feature>
<feature type="transmembrane region" description="Helical" evidence="3">
    <location>
        <begin position="452"/>
        <end position="472"/>
    </location>
</feature>
<feature type="active site" evidence="1">
    <location>
        <position position="349"/>
    </location>
</feature>
<feature type="active site" evidence="1">
    <location>
        <position position="380"/>
    </location>
</feature>
<feature type="modified residue" description="Phosphoserine" evidence="2">
    <location>
        <position position="486"/>
    </location>
</feature>
<feature type="sequence conflict" description="In Ref. 6; AAH24653." evidence="7" ref="6">
    <original>T</original>
    <variation>S</variation>
    <location>
        <position position="99"/>
    </location>
</feature>
<feature type="sequence conflict" description="In Ref. 6; AAH24653." evidence="7" ref="6">
    <original>M</original>
    <variation>T</variation>
    <location>
        <position position="237"/>
    </location>
</feature>
<feature type="sequence conflict" description="In Ref. 6; AAH24653." evidence="7" ref="6">
    <original>P</original>
    <variation>S</variation>
    <location>
        <position position="365"/>
    </location>
</feature>
<evidence type="ECO:0000250" key="1"/>
<evidence type="ECO:0000250" key="2">
    <source>
        <dbReference type="UniProtKB" id="Q6ZNC8"/>
    </source>
</evidence>
<evidence type="ECO:0000255" key="3"/>
<evidence type="ECO:0000269" key="4">
    <source>
    </source>
</evidence>
<evidence type="ECO:0000269" key="5">
    <source>
    </source>
</evidence>
<evidence type="ECO:0000303" key="6">
    <source>
    </source>
</evidence>
<evidence type="ECO:0000305" key="7"/>
<evidence type="ECO:0000305" key="8">
    <source>
    </source>
</evidence>
<evidence type="ECO:0000305" key="9">
    <source>
    </source>
</evidence>
<evidence type="ECO:0000312" key="10">
    <source>
        <dbReference type="MGI" id="MGI:2387184"/>
    </source>
</evidence>
<gene>
    <name evidence="10" type="primary">Mboat1</name>
    <name evidence="6" type="synonym">Lpeat1</name>
    <name type="synonym">Oact1</name>
</gene>
<proteinExistence type="evidence at protein level"/>
<keyword id="KW-0012">Acyltransferase</keyword>
<keyword id="KW-0256">Endoplasmic reticulum</keyword>
<keyword id="KW-0444">Lipid biosynthesis</keyword>
<keyword id="KW-0443">Lipid metabolism</keyword>
<keyword id="KW-0472">Membrane</keyword>
<keyword id="KW-0594">Phospholipid biosynthesis</keyword>
<keyword id="KW-1208">Phospholipid metabolism</keyword>
<keyword id="KW-0597">Phosphoprotein</keyword>
<keyword id="KW-1185">Reference proteome</keyword>
<keyword id="KW-0808">Transferase</keyword>
<keyword id="KW-0812">Transmembrane</keyword>
<keyword id="KW-1133">Transmembrane helix</keyword>
<organism>
    <name type="scientific">Mus musculus</name>
    <name type="common">Mouse</name>
    <dbReference type="NCBI Taxonomy" id="10090"/>
    <lineage>
        <taxon>Eukaryota</taxon>
        <taxon>Metazoa</taxon>
        <taxon>Chordata</taxon>
        <taxon>Craniata</taxon>
        <taxon>Vertebrata</taxon>
        <taxon>Euteleostomi</taxon>
        <taxon>Mammalia</taxon>
        <taxon>Eutheria</taxon>
        <taxon>Euarchontoglires</taxon>
        <taxon>Glires</taxon>
        <taxon>Rodentia</taxon>
        <taxon>Myomorpha</taxon>
        <taxon>Muroidea</taxon>
        <taxon>Muridae</taxon>
        <taxon>Murinae</taxon>
        <taxon>Mus</taxon>
        <taxon>Mus</taxon>
    </lineage>
</organism>
<comment type="function">
    <text evidence="4 5">Acyltransferase which catalyzes the transfer of an acyl group from an acyl-CoA towards a lysophospholipid producing a phospholipid and participates in the reacylation step of the phospholipid remodeling pathway also known as the Lands cycle (PubMed:18287005). Acts on lysophosphatidylserine (1-acyl-2-hydroxy-sn-glycero-3-phospho-L-serine or LPS) and lysophosphatidylethanolamine (1-acyl-sn-glycero-3-phosphoethanolamine or LPE), and to a lesser extend lysophosphatidylcholine (PubMed:18287005). Prefers oleoyl-CoA as the acyl donor and 1-oleoyl-LPE as acceptor (PubMed:18287005). May play a role in neurite outgrowth during neuronal differentiation (PubMed:27048541).</text>
</comment>
<comment type="catalytic activity">
    <reaction evidence="4">
        <text>a 1-acyl-sn-glycero-3-phosphoethanolamine + an acyl-CoA = a 1,2-diacyl-sn-glycero-3-phosphoethanolamine + CoA</text>
        <dbReference type="Rhea" id="RHEA:32995"/>
        <dbReference type="ChEBI" id="CHEBI:57287"/>
        <dbReference type="ChEBI" id="CHEBI:58342"/>
        <dbReference type="ChEBI" id="CHEBI:64381"/>
        <dbReference type="ChEBI" id="CHEBI:64612"/>
        <dbReference type="EC" id="2.3.1.n7"/>
    </reaction>
    <physiologicalReaction direction="left-to-right" evidence="8">
        <dbReference type="Rhea" id="RHEA:32996"/>
    </physiologicalReaction>
</comment>
<comment type="catalytic activity">
    <reaction evidence="4">
        <text>a 1-acyl-sn-glycero-3-phospho-L-serine + an acyl-CoA = a 1,2-diacyl-sn-glycero-3-phospho-L-serine + CoA</text>
        <dbReference type="Rhea" id="RHEA:33191"/>
        <dbReference type="ChEBI" id="CHEBI:57262"/>
        <dbReference type="ChEBI" id="CHEBI:57287"/>
        <dbReference type="ChEBI" id="CHEBI:58342"/>
        <dbReference type="ChEBI" id="CHEBI:64379"/>
        <dbReference type="EC" id="2.3.1.n6"/>
    </reaction>
    <physiologicalReaction direction="left-to-right" evidence="8">
        <dbReference type="Rhea" id="RHEA:33192"/>
    </physiologicalReaction>
</comment>
<comment type="catalytic activity">
    <reaction evidence="2">
        <text>a 1-acyl-sn-glycero-3-phosphocholine + an acyl-CoA = a 1,2-diacyl-sn-glycero-3-phosphocholine + CoA</text>
        <dbReference type="Rhea" id="RHEA:12937"/>
        <dbReference type="ChEBI" id="CHEBI:57287"/>
        <dbReference type="ChEBI" id="CHEBI:57643"/>
        <dbReference type="ChEBI" id="CHEBI:58168"/>
        <dbReference type="ChEBI" id="CHEBI:58342"/>
        <dbReference type="EC" id="2.3.1.23"/>
    </reaction>
    <physiologicalReaction direction="left-to-right" evidence="2">
        <dbReference type="Rhea" id="RHEA:12938"/>
    </physiologicalReaction>
</comment>
<comment type="catalytic activity">
    <reaction evidence="4">
        <text>a 1-O-(1Z-alkenyl)-sn-glycero-3-phosphoethanolamine + (9Z)-octadecenoyl-CoA = 1-O-(1Z)-alkenyl-2-(9Z)-octadecenoyl-sn-glycero-3-phosphoethanolamine + CoA</text>
        <dbReference type="Rhea" id="RHEA:37631"/>
        <dbReference type="ChEBI" id="CHEBI:57287"/>
        <dbReference type="ChEBI" id="CHEBI:57387"/>
        <dbReference type="ChEBI" id="CHEBI:77288"/>
        <dbReference type="ChEBI" id="CHEBI:77291"/>
    </reaction>
    <physiologicalReaction direction="left-to-right" evidence="8">
        <dbReference type="Rhea" id="RHEA:37632"/>
    </physiologicalReaction>
</comment>
<comment type="catalytic activity">
    <reaction evidence="4">
        <text>1-octadecanoyl-sn-glycero-3-phosphoethanolamine + (9Z)-octadecenoyl-CoA = 1-octadecanoyl-2-(9Z-octadecenoyl)-sn-glycero-3-phosphoethanolamine + CoA</text>
        <dbReference type="Rhea" id="RHEA:37523"/>
        <dbReference type="ChEBI" id="CHEBI:57287"/>
        <dbReference type="ChEBI" id="CHEBI:57387"/>
        <dbReference type="ChEBI" id="CHEBI:75036"/>
        <dbReference type="ChEBI" id="CHEBI:75038"/>
    </reaction>
    <physiologicalReaction direction="left-to-right" evidence="8">
        <dbReference type="Rhea" id="RHEA:37524"/>
    </physiologicalReaction>
</comment>
<comment type="catalytic activity">
    <reaction evidence="4">
        <text>1-(9Z-octadecenoyl)-sn-glycero-3-phospho-L-serine + (9Z)-octadecenoyl-CoA = 1,2-di-(9Z)-octadecenoyl-sn-glycero-3-phospho-L-serine + CoA</text>
        <dbReference type="Rhea" id="RHEA:37407"/>
        <dbReference type="ChEBI" id="CHEBI:57287"/>
        <dbReference type="ChEBI" id="CHEBI:57387"/>
        <dbReference type="ChEBI" id="CHEBI:74617"/>
        <dbReference type="ChEBI" id="CHEBI:74905"/>
    </reaction>
    <physiologicalReaction direction="left-to-right" evidence="8">
        <dbReference type="Rhea" id="RHEA:37408"/>
    </physiologicalReaction>
</comment>
<comment type="catalytic activity">
    <reaction evidence="4">
        <text>1-(9Z-octadecenoyl)-sn-glycero-3-phosphoethanolamine + (9Z)-octadecenoyl-CoA = 1,2-di-(9Z-octadecenoyl)-sn-glycero-3-phosphoethanolamine + CoA</text>
        <dbReference type="Rhea" id="RHEA:37499"/>
        <dbReference type="ChEBI" id="CHEBI:57287"/>
        <dbReference type="ChEBI" id="CHEBI:57387"/>
        <dbReference type="ChEBI" id="CHEBI:74971"/>
        <dbReference type="ChEBI" id="CHEBI:74986"/>
    </reaction>
    <physiologicalReaction direction="left-to-right" evidence="8">
        <dbReference type="Rhea" id="RHEA:37500"/>
    </physiologicalReaction>
</comment>
<comment type="catalytic activity">
    <reaction evidence="4">
        <text>1-hexadecanoyl-sn-glycero-3-phosphoethanolamine + (9Z)-octadecenoyl-CoA = 1-hexadecanoyl-2-(9Z-octadecenoyl)-sn-glycero-3-phosphoethanolamine + CoA</text>
        <dbReference type="Rhea" id="RHEA:36015"/>
        <dbReference type="ChEBI" id="CHEBI:57287"/>
        <dbReference type="ChEBI" id="CHEBI:57387"/>
        <dbReference type="ChEBI" id="CHEBI:73004"/>
        <dbReference type="ChEBI" id="CHEBI:73007"/>
    </reaction>
    <physiologicalReaction direction="left-to-right" evidence="8">
        <dbReference type="Rhea" id="RHEA:36016"/>
    </physiologicalReaction>
</comment>
<comment type="catalytic activity">
    <reaction evidence="5">
        <text>1-(10Z-heptadecenoyl)-sn-glycero-3-phosphoethanolamine + hexadecanoyl-CoA = 1-(10Z-heptadecenoyl)-2-hexadecanoyl-sn-glycero-3-phosphoethanolamine + CoA</text>
        <dbReference type="Rhea" id="RHEA:65128"/>
        <dbReference type="ChEBI" id="CHEBI:57287"/>
        <dbReference type="ChEBI" id="CHEBI:57379"/>
        <dbReference type="ChEBI" id="CHEBI:149768"/>
        <dbReference type="ChEBI" id="CHEBI:156345"/>
    </reaction>
    <physiologicalReaction direction="left-to-right" evidence="9">
        <dbReference type="Rhea" id="RHEA:65129"/>
    </physiologicalReaction>
</comment>
<comment type="catalytic activity">
    <reaction evidence="2">
        <text>1-(9Z-octadecenoyl)-sn-glycero-3-phospho-L-serine + octadecanoyl-CoA = 1-(9Z-octadecenoyl)-2-octadecanoyl-sn-glycero-3-phospho-L-serine + CoA</text>
        <dbReference type="Rhea" id="RHEA:37403"/>
        <dbReference type="ChEBI" id="CHEBI:57287"/>
        <dbReference type="ChEBI" id="CHEBI:57394"/>
        <dbReference type="ChEBI" id="CHEBI:74617"/>
        <dbReference type="ChEBI" id="CHEBI:74902"/>
    </reaction>
    <physiologicalReaction direction="left-to-right" evidence="2">
        <dbReference type="Rhea" id="RHEA:37404"/>
    </physiologicalReaction>
</comment>
<comment type="catalytic activity">
    <reaction evidence="2">
        <text>1-(9Z-octadecenoyl)-sn-glycero-3-phospho-L-serine + (9Z)-hexadecenoyl-CoA = 1-(9Z-octadecenoyl)-2-(9Z-hexadecenoyl)-sn-glycero-3-phospho-L-serine + CoA</text>
        <dbReference type="Rhea" id="RHEA:37399"/>
        <dbReference type="ChEBI" id="CHEBI:57287"/>
        <dbReference type="ChEBI" id="CHEBI:61540"/>
        <dbReference type="ChEBI" id="CHEBI:74617"/>
        <dbReference type="ChEBI" id="CHEBI:74901"/>
    </reaction>
    <physiologicalReaction direction="left-to-right" evidence="2">
        <dbReference type="Rhea" id="RHEA:37400"/>
    </physiologicalReaction>
</comment>
<comment type="catalytic activity">
    <reaction evidence="2">
        <text>1-(9Z-octadecenoyl)-sn-glycero-3-phospho-L-serine + (9Z,12Z)-octadecadienoyl-CoA = 1-(9Z-octadecenoyl)-2-(9Z,12Z-octadienoyl)-sn-glycero-3-phospho-L-serine + CoA</text>
        <dbReference type="Rhea" id="RHEA:37375"/>
        <dbReference type="ChEBI" id="CHEBI:57287"/>
        <dbReference type="ChEBI" id="CHEBI:57383"/>
        <dbReference type="ChEBI" id="CHEBI:74617"/>
        <dbReference type="ChEBI" id="CHEBI:74892"/>
    </reaction>
    <physiologicalReaction direction="left-to-right" evidence="2">
        <dbReference type="Rhea" id="RHEA:37376"/>
    </physiologicalReaction>
</comment>
<comment type="catalytic activity">
    <reaction evidence="2">
        <text>1-hexadecanoyl-sn-glycero-3-phosphocholine + (9Z)-octadecenoyl-CoA = 1-hexadecanoyl-2-(9Z-octadecenoyl)-sn-glycero-3-phosphocholine + CoA</text>
        <dbReference type="Rhea" id="RHEA:35991"/>
        <dbReference type="ChEBI" id="CHEBI:57287"/>
        <dbReference type="ChEBI" id="CHEBI:57387"/>
        <dbReference type="ChEBI" id="CHEBI:72998"/>
        <dbReference type="ChEBI" id="CHEBI:73001"/>
    </reaction>
    <physiologicalReaction direction="left-to-right" evidence="2">
        <dbReference type="Rhea" id="RHEA:35992"/>
    </physiologicalReaction>
</comment>
<comment type="catalytic activity">
    <reaction evidence="5">
        <text>1-(10Z-heptadecenoyl)-sn-glycero-3-phosphoethanolamine + (9Z)-octadecenoyl-CoA = 1-(10Z-heptadecenoyl)-2-(9Z-octadecenoyl)-sn-glycero-3-phosphoethanolamine + CoA</text>
        <dbReference type="Rhea" id="RHEA:65136"/>
        <dbReference type="ChEBI" id="CHEBI:57287"/>
        <dbReference type="ChEBI" id="CHEBI:57387"/>
        <dbReference type="ChEBI" id="CHEBI:149768"/>
        <dbReference type="ChEBI" id="CHEBI:156344"/>
    </reaction>
    <physiologicalReaction direction="left-to-right" evidence="9">
        <dbReference type="Rhea" id="RHEA:65137"/>
    </physiologicalReaction>
</comment>
<comment type="biophysicochemical properties">
    <kinetics>
        <KM evidence="4">4.7 uM for oleoyl-CoA (in the presence of LPE C18:1 as cosubstrate)</KM>
        <KM evidence="4">3.9 uM for oleoyl-CoA (in the presence of LPS C18:1 as cosubstrate)</KM>
        <KM evidence="4">7.75 uM for LPE C18:1 (in the presence of oleoyl-CoA as cosubstrate)</KM>
        <KM evidence="4">2.25 uM for LPS C18:1 (in the presence of oleoyl-CoA as cosubstrate)</KM>
        <Vmax evidence="4">9.125 nmol/min/mg enzyme with oleoyl-CoA and LPE C18:1 as substrates</Vmax>
        <Vmax evidence="4">4.7 nmol/min/mg enzyme with oleoyl-CoA and LPS C18:1 as substrates</Vmax>
    </kinetics>
</comment>
<comment type="pathway">
    <text evidence="4">Lipid metabolism; phospholipid metabolism.</text>
</comment>
<comment type="subcellular location">
    <subcellularLocation>
        <location evidence="4">Endoplasmic reticulum membrane</location>
        <topology evidence="3">Multi-pass membrane protein</topology>
    </subcellularLocation>
</comment>
<comment type="tissue specificity">
    <text evidence="4">Highly expressed in stomach, epididymis, and colon.</text>
</comment>
<comment type="similarity">
    <text evidence="7">Belongs to the membrane-bound acyltransferase family.</text>
</comment>
<accession>Q8BH98</accession>
<accession>A9EDS0</accession>
<accession>Q8R3T2</accession>
<protein>
    <recommendedName>
        <fullName evidence="2">Membrane-bound glycerophospholipid O-acyltransferase 1</fullName>
        <ecNumber>2.3.1.-</ecNumber>
    </recommendedName>
    <alternativeName>
        <fullName>1-acylglycerophosphocholine O-acyltransferase</fullName>
        <ecNumber evidence="2">2.3.1.23</ecNumber>
    </alternativeName>
    <alternativeName>
        <fullName evidence="7">1-acylglycerophosphoethanolamine O-acyltransferase MBOAT1</fullName>
        <ecNumber evidence="4">2.3.1.n7</ecNumber>
    </alternativeName>
    <alternativeName>
        <fullName evidence="7">1-acylglycerophosphoserine O-acyltransferase</fullName>
        <ecNumber evidence="4">2.3.1.n6</ecNumber>
    </alternativeName>
    <alternativeName>
        <fullName evidence="7">Lysophosphatidylethanolamine acyltransferase 1</fullName>
        <shortName evidence="6">LPE acyltransferase 1</shortName>
        <shortName>Lyso-PE acyltransferase</shortName>
    </alternativeName>
    <alternativeName>
        <fullName>Lysophosphatidylserine acyltransferase</fullName>
        <shortName>LPSAT</shortName>
        <shortName>Lyso-PS acyltransferase</shortName>
    </alternativeName>
    <alternativeName>
        <fullName evidence="7">Lysophospholipid acyltransferase 1</fullName>
        <shortName>LPLAT 1</shortName>
    </alternativeName>
    <alternativeName>
        <fullName>Membrane-bound O-acyltransferase domain-containing protein 1</fullName>
        <shortName>O-acyltransferase domain-containing protein 1</shortName>
    </alternativeName>
</protein>
<name>MBOA1_MOUSE</name>
<sequence length="492" mass="56160">MAARPPASLSYRTTGSTCLHPLSQLLGIPLDQVNFVACQLFALSAAFWFRIYLHPGKASPEVRHTLATILGIYFVVFCFGWYAVHLFVLVLMCYGVMVTASVSNIHRYSFFVAMGYLTICHISRIYIFHYGILTTDFSGPLMIVTQKITTLAFQVHDGLGRKAEDLSAEQHRLAVKAKPSLLEYLSYHLNFMSVIAGPCNNFKDYVAFIEGRHIHMKLLEVNWTQRGFQSLPEPSPMGAVIQKLCVTLMSLLLFLTLSKSFPVTFLIDDWFVHKANFLSRLWYLYVVMQAAKPKYYFAWTLADAVHNAAGFGFNGMDTDGKSRWDLLSNLNIWKIETATSFKMYLENWNIQTSTWLKCVCYERVPWYPTVLTFLLSALWHGVYPGYYFTFLTGVPVTLAARAVRNNYRHHFLSSKARKIAYDVVTWAVTQLAVSYTAAPFVMLAVEPTISLYKSVFFFLHIICLLIILFLPIKPHQPQRQSRSPNSVKKKAD</sequence>